<accession>Q2UMD5</accession>
<name>BGALC_ASPOR</name>
<keyword id="KW-0119">Carbohydrate metabolism</keyword>
<keyword id="KW-1015">Disulfide bond</keyword>
<keyword id="KW-0325">Glycoprotein</keyword>
<keyword id="KW-0326">Glycosidase</keyword>
<keyword id="KW-0378">Hydrolase</keyword>
<keyword id="KW-0624">Polysaccharide degradation</keyword>
<keyword id="KW-1185">Reference proteome</keyword>
<keyword id="KW-0964">Secreted</keyword>
<keyword id="KW-0732">Signal</keyword>
<organism>
    <name type="scientific">Aspergillus oryzae (strain ATCC 42149 / RIB 40)</name>
    <name type="common">Yellow koji mold</name>
    <dbReference type="NCBI Taxonomy" id="510516"/>
    <lineage>
        <taxon>Eukaryota</taxon>
        <taxon>Fungi</taxon>
        <taxon>Dikarya</taxon>
        <taxon>Ascomycota</taxon>
        <taxon>Pezizomycotina</taxon>
        <taxon>Eurotiomycetes</taxon>
        <taxon>Eurotiomycetidae</taxon>
        <taxon>Eurotiales</taxon>
        <taxon>Aspergillaceae</taxon>
        <taxon>Aspergillus</taxon>
        <taxon>Aspergillus subgen. Circumdati</taxon>
    </lineage>
</organism>
<reference key="1">
    <citation type="journal article" date="2005" name="Nature">
        <title>Genome sequencing and analysis of Aspergillus oryzae.</title>
        <authorList>
            <person name="Machida M."/>
            <person name="Asai K."/>
            <person name="Sano M."/>
            <person name="Tanaka T."/>
            <person name="Kumagai T."/>
            <person name="Terai G."/>
            <person name="Kusumoto K."/>
            <person name="Arima T."/>
            <person name="Akita O."/>
            <person name="Kashiwagi Y."/>
            <person name="Abe K."/>
            <person name="Gomi K."/>
            <person name="Horiuchi H."/>
            <person name="Kitamoto K."/>
            <person name="Kobayashi T."/>
            <person name="Takeuchi M."/>
            <person name="Denning D.W."/>
            <person name="Galagan J.E."/>
            <person name="Nierman W.C."/>
            <person name="Yu J."/>
            <person name="Archer D.B."/>
            <person name="Bennett J.W."/>
            <person name="Bhatnagar D."/>
            <person name="Cleveland T.E."/>
            <person name="Fedorova N.D."/>
            <person name="Gotoh O."/>
            <person name="Horikawa H."/>
            <person name="Hosoyama A."/>
            <person name="Ichinomiya M."/>
            <person name="Igarashi R."/>
            <person name="Iwashita K."/>
            <person name="Juvvadi P.R."/>
            <person name="Kato M."/>
            <person name="Kato Y."/>
            <person name="Kin T."/>
            <person name="Kokubun A."/>
            <person name="Maeda H."/>
            <person name="Maeyama N."/>
            <person name="Maruyama J."/>
            <person name="Nagasaki H."/>
            <person name="Nakajima T."/>
            <person name="Oda K."/>
            <person name="Okada K."/>
            <person name="Paulsen I."/>
            <person name="Sakamoto K."/>
            <person name="Sawano T."/>
            <person name="Takahashi M."/>
            <person name="Takase K."/>
            <person name="Terabayashi Y."/>
            <person name="Wortman J.R."/>
            <person name="Yamada O."/>
            <person name="Yamagata Y."/>
            <person name="Anazawa H."/>
            <person name="Hata Y."/>
            <person name="Koide Y."/>
            <person name="Komori T."/>
            <person name="Koyama Y."/>
            <person name="Minetoki T."/>
            <person name="Suharnan S."/>
            <person name="Tanaka A."/>
            <person name="Isono K."/>
            <person name="Kuhara S."/>
            <person name="Ogasawara N."/>
            <person name="Kikuchi H."/>
        </authorList>
    </citation>
    <scope>NUCLEOTIDE SEQUENCE [LARGE SCALE GENOMIC DNA]</scope>
    <source>
        <strain>ATCC 42149 / RIB 40</strain>
    </source>
</reference>
<proteinExistence type="inferred from homology"/>
<evidence type="ECO:0000250" key="1"/>
<evidence type="ECO:0000255" key="2"/>
<evidence type="ECO:0000305" key="3"/>
<gene>
    <name type="primary">lacC</name>
    <name type="ORF">AO090003000042</name>
</gene>
<comment type="function">
    <text evidence="1">Cleaves beta-linked terminal galactosyl residues from gangliosides, glycoproteins, and glycosaminoglycans.</text>
</comment>
<comment type="catalytic activity">
    <reaction>
        <text>Hydrolysis of terminal non-reducing beta-D-galactose residues in beta-D-galactosides.</text>
        <dbReference type="EC" id="3.2.1.23"/>
    </reaction>
</comment>
<comment type="subcellular location">
    <subcellularLocation>
        <location evidence="1">Secreted</location>
    </subcellularLocation>
</comment>
<comment type="similarity">
    <text evidence="3">Belongs to the glycosyl hydrolase 35 family.</text>
</comment>
<sequence length="984" mass="108653">MRLLSFIYLVWLALLTGTPQVSATDNGKTSDVAWDKYSLSVKGERLFVFSGEFHYQRLPVPELWLDVFQKLRANGFNTISVYFFWSYHSASEDVFDFTTGAHDIQRLFDYAKQAGLYVIARAGPYCNAETSAGGFALWAANGQMGSERTSDEAYYKKWKPWILEVGKIIAANQITNGGPVILNQHENELQETTYDSNDTKVIYMEQVAKAFEEAGVVVPSSHNEKGMRTVSWSTDYKNVGGAVNVYGLDSYPGSLSCANPNSGFNLLRTYYQWFQNYSYTQPEYLAEFEGGWFQPWGGSFYDSCASELSPEFADVYYKNNIGSRVTLHNIYMTFGGTNWGHSAAPVVYTSYDYGSPLRETREIRDKLKQTKLLGLFTRVSKDLLKTYMEGNGTSYTSDDSIYTWALRNPDSDAGFYVVAHNTSSSREVTTFSLNITTSAGAMTIPDIELDGRQSKIIVTDYSIGSESSLLYSSAEVLTYATLDVDVLVFYLNAGQKGAFVFKDAPADLKYQTYGNSNLSALETSQGTQYSYTQGEGVTAVKFSNGVLVYLLDKETAWNFFAPPTVSSPTVAPNEHILVFGPYLVRGASIKHDTVEIVGDNSNSTSIEIYTGDEHVKKVSWNGNLIDTRATAYGSLIGTVPGAEDIEISLPSLSSWKAQDTLPEISPDYDDSRWTICNKTTSVNSVAPLSLPVLYSGDYGYHTGTKIYRGRFDGQNATGANVTVQNGVAAGWAAWLNGAYVGGFSGDPDKVASWEVLKFNHSSLRSRDNVLTIITDYTGHDQNSQKPIGTQNPRGIMGATLIGGGNFTLWRIQGNAGGEKNIDPVRGPMNEGGLYGERMGWHLPGYQVPESALDSSPLEGVSGAEGRFYTTSFQLDLEEDLDVPIGLQLSAPAGTEAVVQIFMNGYQFGHYLPHIGPQSLFPFPPGVIKNRGQNSLAISMWALTDAGARLEQVELKAYAKYRSGFDFNRDWTYLQPGWKDRTEYA</sequence>
<protein>
    <recommendedName>
        <fullName>Probable beta-galactosidase C</fullName>
        <ecNumber>3.2.1.23</ecNumber>
    </recommendedName>
    <alternativeName>
        <fullName>Lactase C</fullName>
    </alternativeName>
</protein>
<feature type="signal peptide" evidence="2">
    <location>
        <begin position="1"/>
        <end position="23"/>
    </location>
</feature>
<feature type="chain" id="PRO_0000395238" description="Probable beta-galactosidase C">
    <location>
        <begin position="24"/>
        <end position="984"/>
    </location>
</feature>
<feature type="active site" description="Proton donor" evidence="2">
    <location>
        <position position="188"/>
    </location>
</feature>
<feature type="active site" description="Nucleophile" evidence="2">
    <location>
        <position position="287"/>
    </location>
</feature>
<feature type="binding site" evidence="1">
    <location>
        <position position="82"/>
    </location>
    <ligand>
        <name>substrate</name>
    </ligand>
</feature>
<feature type="binding site" evidence="1">
    <location>
        <position position="127"/>
    </location>
    <ligand>
        <name>substrate</name>
    </ligand>
</feature>
<feature type="binding site" evidence="1">
    <location>
        <position position="128"/>
    </location>
    <ligand>
        <name>substrate</name>
    </ligand>
</feature>
<feature type="binding site" evidence="1">
    <location>
        <position position="129"/>
    </location>
    <ligand>
        <name>substrate</name>
    </ligand>
</feature>
<feature type="binding site" evidence="1">
    <location>
        <position position="187"/>
    </location>
    <ligand>
        <name>substrate</name>
    </ligand>
</feature>
<feature type="binding site" evidence="1">
    <location>
        <position position="251"/>
    </location>
    <ligand>
        <name>substrate</name>
    </ligand>
</feature>
<feature type="binding site" evidence="1">
    <location>
        <position position="353"/>
    </location>
    <ligand>
        <name>substrate</name>
    </ligand>
</feature>
<feature type="glycosylation site" description="N-linked (GlcNAc...) asparagine" evidence="2">
    <location>
        <position position="197"/>
    </location>
</feature>
<feature type="glycosylation site" description="N-linked (GlcNAc...) asparagine" evidence="2">
    <location>
        <position position="276"/>
    </location>
</feature>
<feature type="glycosylation site" description="N-linked (GlcNAc...) asparagine" evidence="2">
    <location>
        <position position="391"/>
    </location>
</feature>
<feature type="glycosylation site" description="N-linked (GlcNAc...) asparagine" evidence="2">
    <location>
        <position position="421"/>
    </location>
</feature>
<feature type="glycosylation site" description="N-linked (GlcNAc...) asparagine" evidence="2">
    <location>
        <position position="434"/>
    </location>
</feature>
<feature type="glycosylation site" description="N-linked (GlcNAc...) asparagine" evidence="2">
    <location>
        <position position="517"/>
    </location>
</feature>
<feature type="glycosylation site" description="N-linked (GlcNAc...) asparagine" evidence="2">
    <location>
        <position position="602"/>
    </location>
</feature>
<feature type="glycosylation site" description="N-linked (GlcNAc...) asparagine" evidence="2">
    <location>
        <position position="677"/>
    </location>
</feature>
<feature type="glycosylation site" description="N-linked (GlcNAc...) asparagine" evidence="2">
    <location>
        <position position="715"/>
    </location>
</feature>
<feature type="glycosylation site" description="N-linked (GlcNAc...) asparagine" evidence="2">
    <location>
        <position position="720"/>
    </location>
</feature>
<feature type="glycosylation site" description="N-linked (GlcNAc...) asparagine" evidence="2">
    <location>
        <position position="759"/>
    </location>
</feature>
<feature type="glycosylation site" description="N-linked (GlcNAc...) asparagine" evidence="2">
    <location>
        <position position="805"/>
    </location>
</feature>
<feature type="disulfide bond" evidence="1">
    <location>
        <begin position="257"/>
        <end position="304"/>
    </location>
</feature>
<dbReference type="EC" id="3.2.1.23"/>
<dbReference type="EMBL" id="BA000050">
    <property type="protein sequence ID" value="BAE57280.1"/>
    <property type="molecule type" value="Genomic_DNA"/>
</dbReference>
<dbReference type="RefSeq" id="XP_001819282.1">
    <property type="nucleotide sequence ID" value="XM_001819230.1"/>
</dbReference>
<dbReference type="SMR" id="Q2UMD5"/>
<dbReference type="STRING" id="510516.Q2UMD5"/>
<dbReference type="Allergome" id="1261">
    <property type="allergen name" value="Asp o Lactase"/>
</dbReference>
<dbReference type="CAZy" id="GH35">
    <property type="family name" value="Glycoside Hydrolase Family 35"/>
</dbReference>
<dbReference type="GlyCosmos" id="Q2UMD5">
    <property type="glycosylation" value="12 sites, No reported glycans"/>
</dbReference>
<dbReference type="EnsemblFungi" id="BAE57280">
    <property type="protein sequence ID" value="BAE57280"/>
    <property type="gene ID" value="AO090003000042"/>
</dbReference>
<dbReference type="GeneID" id="5991265"/>
<dbReference type="KEGG" id="aor:AO090003000042"/>
<dbReference type="VEuPathDB" id="FungiDB:AO090003000042"/>
<dbReference type="HOGENOM" id="CLU_005732_2_1_1"/>
<dbReference type="OMA" id="PEFEGGW"/>
<dbReference type="OrthoDB" id="39863at5052"/>
<dbReference type="Proteomes" id="UP000006564">
    <property type="component" value="Chromosome 2"/>
</dbReference>
<dbReference type="GO" id="GO:0005576">
    <property type="term" value="C:extracellular region"/>
    <property type="evidence" value="ECO:0007669"/>
    <property type="project" value="UniProtKB-SubCell"/>
</dbReference>
<dbReference type="GO" id="GO:0004565">
    <property type="term" value="F:beta-galactosidase activity"/>
    <property type="evidence" value="ECO:0007669"/>
    <property type="project" value="UniProtKB-EC"/>
</dbReference>
<dbReference type="GO" id="GO:0000272">
    <property type="term" value="P:polysaccharide catabolic process"/>
    <property type="evidence" value="ECO:0007669"/>
    <property type="project" value="UniProtKB-KW"/>
</dbReference>
<dbReference type="FunFam" id="2.102.20.10:FF:000001">
    <property type="entry name" value="Beta-galactosidase A"/>
    <property type="match status" value="1"/>
</dbReference>
<dbReference type="FunFam" id="2.60.120.260:FF:000065">
    <property type="entry name" value="Beta-galactosidase A"/>
    <property type="match status" value="1"/>
</dbReference>
<dbReference type="FunFam" id="3.20.20.80:FF:000040">
    <property type="entry name" value="Beta-galactosidase A"/>
    <property type="match status" value="1"/>
</dbReference>
<dbReference type="FunFam" id="2.60.120.260:FF:000144">
    <property type="entry name" value="Probable beta-galactosidase C"/>
    <property type="match status" value="1"/>
</dbReference>
<dbReference type="Gene3D" id="2.102.20.10">
    <property type="entry name" value="Beta-galactosidase, domain 2"/>
    <property type="match status" value="1"/>
</dbReference>
<dbReference type="Gene3D" id="2.60.390.10">
    <property type="entry name" value="Beta-galactosidase, domain 3"/>
    <property type="match status" value="1"/>
</dbReference>
<dbReference type="Gene3D" id="2.60.120.260">
    <property type="entry name" value="Galactose-binding domain-like"/>
    <property type="match status" value="2"/>
</dbReference>
<dbReference type="Gene3D" id="3.20.20.80">
    <property type="entry name" value="Glycosidases"/>
    <property type="match status" value="1"/>
</dbReference>
<dbReference type="InterPro" id="IPR018954">
    <property type="entry name" value="Betagal_dom2"/>
</dbReference>
<dbReference type="InterPro" id="IPR037110">
    <property type="entry name" value="Betagal_dom2_sf"/>
</dbReference>
<dbReference type="InterPro" id="IPR025972">
    <property type="entry name" value="BetaGal_dom3"/>
</dbReference>
<dbReference type="InterPro" id="IPR036833">
    <property type="entry name" value="BetaGal_dom3_sf"/>
</dbReference>
<dbReference type="InterPro" id="IPR025300">
    <property type="entry name" value="BetaGal_jelly_roll_dom"/>
</dbReference>
<dbReference type="InterPro" id="IPR008979">
    <property type="entry name" value="Galactose-bd-like_sf"/>
</dbReference>
<dbReference type="InterPro" id="IPR031330">
    <property type="entry name" value="Gly_Hdrlase_35_cat"/>
</dbReference>
<dbReference type="InterPro" id="IPR001944">
    <property type="entry name" value="Glycoside_Hdrlase_35"/>
</dbReference>
<dbReference type="InterPro" id="IPR017853">
    <property type="entry name" value="Glycoside_hydrolase_SF"/>
</dbReference>
<dbReference type="PANTHER" id="PTHR23421">
    <property type="entry name" value="BETA-GALACTOSIDASE RELATED"/>
    <property type="match status" value="1"/>
</dbReference>
<dbReference type="Pfam" id="PF13364">
    <property type="entry name" value="BetaGal_ABD2"/>
    <property type="match status" value="2"/>
</dbReference>
<dbReference type="Pfam" id="PF10435">
    <property type="entry name" value="BetaGal_dom2"/>
    <property type="match status" value="1"/>
</dbReference>
<dbReference type="Pfam" id="PF13363">
    <property type="entry name" value="BetaGal_dom3"/>
    <property type="match status" value="1"/>
</dbReference>
<dbReference type="Pfam" id="PF01301">
    <property type="entry name" value="Glyco_hydro_35"/>
    <property type="match status" value="1"/>
</dbReference>
<dbReference type="PRINTS" id="PR00742">
    <property type="entry name" value="GLHYDRLASE35"/>
</dbReference>
<dbReference type="SMART" id="SM01029">
    <property type="entry name" value="BetaGal_dom2"/>
    <property type="match status" value="1"/>
</dbReference>
<dbReference type="SUPFAM" id="SSF51445">
    <property type="entry name" value="(Trans)glycosidases"/>
    <property type="match status" value="1"/>
</dbReference>
<dbReference type="SUPFAM" id="SSF117100">
    <property type="entry name" value="Beta-galactosidase LacA, domain 3"/>
    <property type="match status" value="1"/>
</dbReference>
<dbReference type="SUPFAM" id="SSF49785">
    <property type="entry name" value="Galactose-binding domain-like"/>
    <property type="match status" value="2"/>
</dbReference>
<dbReference type="SUPFAM" id="SSF51011">
    <property type="entry name" value="Glycosyl hydrolase domain"/>
    <property type="match status" value="1"/>
</dbReference>